<keyword id="KW-0349">Heme</keyword>
<keyword id="KW-0408">Iron</keyword>
<keyword id="KW-0472">Membrane</keyword>
<keyword id="KW-0479">Metal-binding</keyword>
<keyword id="KW-0503">Monooxygenase</keyword>
<keyword id="KW-0560">Oxidoreductase</keyword>
<keyword id="KW-0812">Transmembrane</keyword>
<keyword id="KW-1133">Transmembrane helix</keyword>
<sequence length="487" mass="55662">MELLFVSLLSLFLLILLPLSLLFLFPSSFSTTTTEANKNSANLPPGLTGWPVVGESFQFLAAGWRGNPEKFIFDRIAKYSSYVYKTNLMLERTAVFCGAPAHKFLFSNENKLVQSWWPSSVNKIFPSSNQTSSKEEAMKMRKMLPNFFKPEALQGYIGIMDTIAQRHFAADWDNKDYIVVFPLCKRYTFWLACKIFMSIEDPKDVDRFLARFNLVAEGLLSIPIDLPGTPFHHSIKAAEFIREHLVAIIKQRKIDLAEGKASPTQDIMSYMLLTPDEDGKFMKEYDIADKILGLLVGGHDTASSACAFIVKYLAELPQVYQGVYKEQMEIAKSKGPGELLNWDDIQKMKYSWNVACEVLRLAPPLQGAFRDVLKDFMYEGFYIPKGWKVYWSAHSTHKNPEYFPEPYKFDPSRFDGSGPAPYTFVPFGGGPRMCPGKEYARLEILVFMHNLVKRFRWEKLIPDEKIVVNPMPVPEKGLPIRLFSYDA</sequence>
<reference key="1">
    <citation type="journal article" date="2015" name="Mol. Plant">
        <title>Unraveling the triterpenoid saponin biosynthesis of the African shrub Maesa lanceolata.</title>
        <authorList>
            <person name="Moses T."/>
            <person name="Pollier J."/>
            <person name="Faizal A."/>
            <person name="Apers S."/>
            <person name="Pieters L."/>
            <person name="Thevelein J.M."/>
            <person name="Geelen D."/>
            <person name="Goossens A."/>
        </authorList>
    </citation>
    <scope>NUCLEOTIDE SEQUENCE [MRNA]</scope>
    <scope>FUNCTION</scope>
    <scope>CATALYTIC ACTIVITY</scope>
</reference>
<name>C7A75_MAELA</name>
<protein>
    <recommendedName>
        <fullName evidence="4">Cytochrome P450 716A75</fullName>
        <ecNumber evidence="3">1.14.14.-</ecNumber>
    </recommendedName>
</protein>
<proteinExistence type="evidence at protein level"/>
<comment type="function">
    <text evidence="3">Catalyzes the C-28 oxidation of beta-amyrin to form erythrodiol (PubMed:25578277). Catalyzes the C-28 oxidation of erythrodiol to form oleanolic aldehyde (PubMed:25578277). Catalyzes the C-28 oxidation of oleanolic aldehyde to form oleanolate (PubMed:25578277).</text>
</comment>
<comment type="catalytic activity">
    <reaction evidence="3">
        <text>beta-amyrin + reduced [NADPH--hemoprotein reductase] + O2 = erythrodiol + oxidized [NADPH--hemoprotein reductase] + H2O + H(+)</text>
        <dbReference type="Rhea" id="RHEA:43072"/>
        <dbReference type="Rhea" id="RHEA-COMP:11964"/>
        <dbReference type="Rhea" id="RHEA-COMP:11965"/>
        <dbReference type="ChEBI" id="CHEBI:10352"/>
        <dbReference type="ChEBI" id="CHEBI:15377"/>
        <dbReference type="ChEBI" id="CHEBI:15378"/>
        <dbReference type="ChEBI" id="CHEBI:15379"/>
        <dbReference type="ChEBI" id="CHEBI:57618"/>
        <dbReference type="ChEBI" id="CHEBI:58210"/>
        <dbReference type="ChEBI" id="CHEBI:67939"/>
    </reaction>
    <physiologicalReaction direction="left-to-right" evidence="3">
        <dbReference type="Rhea" id="RHEA:43073"/>
    </physiologicalReaction>
</comment>
<comment type="catalytic activity">
    <reaction evidence="3">
        <text>erythrodiol + reduced [NADPH--hemoprotein reductase] + O2 = oleanolic aldehyde + oxidized [NADPH--hemoprotein reductase] + 2 H2O + H(+)</text>
        <dbReference type="Rhea" id="RHEA:43076"/>
        <dbReference type="Rhea" id="RHEA-COMP:11964"/>
        <dbReference type="Rhea" id="RHEA-COMP:11965"/>
        <dbReference type="ChEBI" id="CHEBI:15377"/>
        <dbReference type="ChEBI" id="CHEBI:15378"/>
        <dbReference type="ChEBI" id="CHEBI:15379"/>
        <dbReference type="ChEBI" id="CHEBI:57618"/>
        <dbReference type="ChEBI" id="CHEBI:58210"/>
        <dbReference type="ChEBI" id="CHEBI:67939"/>
        <dbReference type="ChEBI" id="CHEBI:82827"/>
    </reaction>
    <physiologicalReaction direction="left-to-right" evidence="3">
        <dbReference type="Rhea" id="RHEA:43077"/>
    </physiologicalReaction>
</comment>
<comment type="catalytic activity">
    <reaction evidence="3">
        <text>oleanolic aldehyde + reduced [NADPH--hemoprotein reductase] + O2 = oleanolate + oxidized [NADPH--hemoprotein reductase] + H2O + 2 H(+)</text>
        <dbReference type="Rhea" id="RHEA:43080"/>
        <dbReference type="Rhea" id="RHEA-COMP:11964"/>
        <dbReference type="Rhea" id="RHEA-COMP:11965"/>
        <dbReference type="ChEBI" id="CHEBI:15377"/>
        <dbReference type="ChEBI" id="CHEBI:15378"/>
        <dbReference type="ChEBI" id="CHEBI:15379"/>
        <dbReference type="ChEBI" id="CHEBI:57618"/>
        <dbReference type="ChEBI" id="CHEBI:58210"/>
        <dbReference type="ChEBI" id="CHEBI:82827"/>
        <dbReference type="ChEBI" id="CHEBI:82828"/>
    </reaction>
    <physiologicalReaction direction="left-to-right" evidence="3">
        <dbReference type="Rhea" id="RHEA:43081"/>
    </physiologicalReaction>
</comment>
<comment type="cofactor">
    <cofactor evidence="1">
        <name>heme</name>
        <dbReference type="ChEBI" id="CHEBI:30413"/>
    </cofactor>
</comment>
<comment type="subcellular location">
    <subcellularLocation>
        <location evidence="2">Membrane</location>
        <topology evidence="2">Single-pass membrane protein</topology>
    </subcellularLocation>
</comment>
<comment type="similarity">
    <text evidence="5">Belongs to the cytochrome P450 family.</text>
</comment>
<gene>
    <name evidence="4" type="primary">CYP716A75</name>
</gene>
<accession>A0A0B4L1W8</accession>
<feature type="chain" id="PRO_0000455171" description="Cytochrome P450 716A75">
    <location>
        <begin position="1"/>
        <end position="487"/>
    </location>
</feature>
<feature type="transmembrane region" description="Helical" evidence="2">
    <location>
        <begin position="5"/>
        <end position="25"/>
    </location>
</feature>
<feature type="binding site" description="axial binding residue" evidence="1">
    <location>
        <position position="434"/>
    </location>
    <ligand>
        <name>heme</name>
        <dbReference type="ChEBI" id="CHEBI:30413"/>
    </ligand>
    <ligandPart>
        <name>Fe</name>
        <dbReference type="ChEBI" id="CHEBI:18248"/>
    </ligandPart>
</feature>
<dbReference type="EC" id="1.14.14.-" evidence="3"/>
<dbReference type="EMBL" id="KF318733">
    <property type="protein sequence ID" value="AHF22088.1"/>
    <property type="molecule type" value="mRNA"/>
</dbReference>
<dbReference type="SMR" id="A0A0B4L1W8"/>
<dbReference type="KEGG" id="ag:AHF22088"/>
<dbReference type="GO" id="GO:0016020">
    <property type="term" value="C:membrane"/>
    <property type="evidence" value="ECO:0007669"/>
    <property type="project" value="UniProtKB-SubCell"/>
</dbReference>
<dbReference type="GO" id="GO:0020037">
    <property type="term" value="F:heme binding"/>
    <property type="evidence" value="ECO:0007669"/>
    <property type="project" value="InterPro"/>
</dbReference>
<dbReference type="GO" id="GO:0005506">
    <property type="term" value="F:iron ion binding"/>
    <property type="evidence" value="ECO:0007669"/>
    <property type="project" value="InterPro"/>
</dbReference>
<dbReference type="GO" id="GO:0004497">
    <property type="term" value="F:monooxygenase activity"/>
    <property type="evidence" value="ECO:0007669"/>
    <property type="project" value="UniProtKB-KW"/>
</dbReference>
<dbReference type="GO" id="GO:0016705">
    <property type="term" value="F:oxidoreductase activity, acting on paired donors, with incorporation or reduction of molecular oxygen"/>
    <property type="evidence" value="ECO:0007669"/>
    <property type="project" value="InterPro"/>
</dbReference>
<dbReference type="GO" id="GO:0016125">
    <property type="term" value="P:sterol metabolic process"/>
    <property type="evidence" value="ECO:0007669"/>
    <property type="project" value="TreeGrafter"/>
</dbReference>
<dbReference type="CDD" id="cd11043">
    <property type="entry name" value="CYP90-like"/>
    <property type="match status" value="1"/>
</dbReference>
<dbReference type="FunFam" id="1.10.630.10:FF:000022">
    <property type="entry name" value="Taxadiene 5-alpha hydroxylase"/>
    <property type="match status" value="1"/>
</dbReference>
<dbReference type="Gene3D" id="1.10.630.10">
    <property type="entry name" value="Cytochrome P450"/>
    <property type="match status" value="1"/>
</dbReference>
<dbReference type="InterPro" id="IPR001128">
    <property type="entry name" value="Cyt_P450"/>
</dbReference>
<dbReference type="InterPro" id="IPR017972">
    <property type="entry name" value="Cyt_P450_CS"/>
</dbReference>
<dbReference type="InterPro" id="IPR002401">
    <property type="entry name" value="Cyt_P450_E_grp-I"/>
</dbReference>
<dbReference type="InterPro" id="IPR036396">
    <property type="entry name" value="Cyt_P450_sf"/>
</dbReference>
<dbReference type="PANTHER" id="PTHR24286">
    <property type="entry name" value="CYTOCHROME P450 26"/>
    <property type="match status" value="1"/>
</dbReference>
<dbReference type="PANTHER" id="PTHR24286:SF349">
    <property type="entry name" value="CYTOCHROME P450 716A1-RELATED"/>
    <property type="match status" value="1"/>
</dbReference>
<dbReference type="Pfam" id="PF00067">
    <property type="entry name" value="p450"/>
    <property type="match status" value="1"/>
</dbReference>
<dbReference type="PRINTS" id="PR00463">
    <property type="entry name" value="EP450I"/>
</dbReference>
<dbReference type="PRINTS" id="PR00385">
    <property type="entry name" value="P450"/>
</dbReference>
<dbReference type="SUPFAM" id="SSF48264">
    <property type="entry name" value="Cytochrome P450"/>
    <property type="match status" value="1"/>
</dbReference>
<dbReference type="PROSITE" id="PS00086">
    <property type="entry name" value="CYTOCHROME_P450"/>
    <property type="match status" value="1"/>
</dbReference>
<evidence type="ECO:0000250" key="1">
    <source>
        <dbReference type="UniProtKB" id="Q96242"/>
    </source>
</evidence>
<evidence type="ECO:0000255" key="2"/>
<evidence type="ECO:0000269" key="3">
    <source>
    </source>
</evidence>
<evidence type="ECO:0000303" key="4">
    <source>
    </source>
</evidence>
<evidence type="ECO:0000305" key="5"/>
<organism>
    <name type="scientific">Maesa lanceolata</name>
    <name type="common">False assegai</name>
    <dbReference type="NCBI Taxonomy" id="992730"/>
    <lineage>
        <taxon>Eukaryota</taxon>
        <taxon>Viridiplantae</taxon>
        <taxon>Streptophyta</taxon>
        <taxon>Embryophyta</taxon>
        <taxon>Tracheophyta</taxon>
        <taxon>Spermatophyta</taxon>
        <taxon>Magnoliopsida</taxon>
        <taxon>eudicotyledons</taxon>
        <taxon>Gunneridae</taxon>
        <taxon>Pentapetalae</taxon>
        <taxon>asterids</taxon>
        <taxon>Ericales</taxon>
        <taxon>Primulaceae</taxon>
        <taxon>Maesa</taxon>
    </lineage>
</organism>